<keyword id="KW-0027">Amidation</keyword>
<keyword id="KW-0968">Cytoplasmic vesicle</keyword>
<keyword id="KW-0903">Direct protein sequencing</keyword>
<keyword id="KW-1015">Disulfide bond</keyword>
<keyword id="KW-0256">Endoplasmic reticulum</keyword>
<keyword id="KW-0527">Neuropeptide</keyword>
<keyword id="KW-0873">Pyrrolidone carboxylic acid</keyword>
<keyword id="KW-1185">Reference proteome</keyword>
<keyword id="KW-0770">Synapse</keyword>
<sequence length="131" mass="13465">MNPSSTKVSWATVTLLLLLLLLPPALLSPGAAAQPLPDCCRQKTCSCRLYELLHGAGNHAAGILTLGKRRPGPPGLQGRLQRLLQASGNHAAGILTMGRRAGAEPALRPCSGRRCPSEAASSVAPGGRSGV</sequence>
<evidence type="ECO:0000250" key="1">
    <source>
        <dbReference type="UniProtKB" id="O55232"/>
    </source>
</evidence>
<evidence type="ECO:0000256" key="2">
    <source>
        <dbReference type="SAM" id="MobiDB-lite"/>
    </source>
</evidence>
<evidence type="ECO:0000305" key="3"/>
<evidence type="ECO:0000312" key="4">
    <source>
        <dbReference type="Proteomes" id="UP000009136"/>
    </source>
</evidence>
<reference evidence="4" key="1">
    <citation type="submission" date="2018-03" db="EMBL/GenBank/DDBJ databases">
        <title>ARS-UCD1.2.</title>
        <authorList>
            <person name="Rosen B.D."/>
            <person name="Bickhart D.M."/>
            <person name="Koren S."/>
            <person name="Schnabel R.D."/>
            <person name="Hall R."/>
            <person name="Zimin A."/>
            <person name="Dreischer C."/>
            <person name="Schultheiss S."/>
            <person name="Schroeder S.G."/>
            <person name="Elsik C.G."/>
            <person name="Couldrey C."/>
            <person name="Liu G.E."/>
            <person name="Van Tassell C.P."/>
            <person name="Phillippy A.M."/>
            <person name="Smith T.P.L."/>
            <person name="Medrano J.F."/>
        </authorList>
    </citation>
    <scope>NUCLEOTIDE SEQUENCE [LARGE SCALE GENOMIC DNA]</scope>
    <source>
        <strain evidence="4">Hereford</strain>
    </source>
</reference>
<reference key="2">
    <citation type="journal article" date="1998" name="Cell">
        <title>Orexins and orexin receptors: a family of hypothalamic neuropeptides and G protein-coupled receptors that regulate feeding behavior.</title>
        <authorList>
            <person name="Sakurai T."/>
            <person name="Amemiya A."/>
            <person name="Ishii M."/>
            <person name="Matsuzaki I."/>
            <person name="Chemelli R.M."/>
            <person name="Tanaka H."/>
            <person name="Williams S.C."/>
            <person name="Richardson J.A."/>
            <person name="Kozlowski G.P."/>
            <person name="Wilson S."/>
            <person name="Arch J.R.S."/>
            <person name="Buckingham R.E."/>
            <person name="Haynes A.C."/>
            <person name="Carr S.A."/>
            <person name="Annan R.S."/>
            <person name="McNulty D.E."/>
            <person name="Liu W.-S."/>
            <person name="Terrett J.A."/>
            <person name="Elshourbagy N.A."/>
            <person name="Bergsma D.J."/>
            <person name="Yanagisawa M."/>
        </authorList>
    </citation>
    <scope>PROTEIN SEQUENCE OF 34-66</scope>
    <source>
        <tissue>Hypothalamus</tissue>
    </source>
</reference>
<feature type="peptide" id="PRO_0000044769" description="Hypocretin neuropeptide precursor">
    <location>
        <begin position="1"/>
        <end position="131"/>
    </location>
</feature>
<feature type="peptide" id="PRO_0000456581" description="Orexin-A" evidence="1">
    <location>
        <begin position="34"/>
        <end position="66"/>
    </location>
</feature>
<feature type="peptide" id="PRO_0000456582" description="Orexin-B" evidence="1">
    <location>
        <begin position="70"/>
        <end position="97"/>
    </location>
</feature>
<feature type="region of interest" description="Disordered" evidence="2">
    <location>
        <begin position="104"/>
        <end position="131"/>
    </location>
</feature>
<feature type="modified residue" description="Pyrrolidone carboxylic acid" evidence="1">
    <location>
        <position position="34"/>
    </location>
</feature>
<feature type="modified residue" description="Leucine amide" evidence="1">
    <location>
        <position position="66"/>
    </location>
</feature>
<feature type="disulfide bond" evidence="1">
    <location>
        <begin position="39"/>
        <end position="45"/>
    </location>
</feature>
<feature type="disulfide bond" evidence="1">
    <location>
        <begin position="40"/>
        <end position="47"/>
    </location>
</feature>
<organism evidence="4">
    <name type="scientific">Bos taurus</name>
    <name type="common">Bovine</name>
    <dbReference type="NCBI Taxonomy" id="9913"/>
    <lineage>
        <taxon>Eukaryota</taxon>
        <taxon>Metazoa</taxon>
        <taxon>Chordata</taxon>
        <taxon>Craniata</taxon>
        <taxon>Vertebrata</taxon>
        <taxon>Euteleostomi</taxon>
        <taxon>Mammalia</taxon>
        <taxon>Eutheria</taxon>
        <taxon>Laurasiatheria</taxon>
        <taxon>Artiodactyla</taxon>
        <taxon>Ruminantia</taxon>
        <taxon>Pecora</taxon>
        <taxon>Bovidae</taxon>
        <taxon>Bovinae</taxon>
        <taxon>Bos</taxon>
    </lineage>
</organism>
<comment type="function">
    <text evidence="1">Neuropeptides that play a significant role in the regulation of food intake and sleep-wakefulness, possibly by coordinating the complex behavioral and physiologic responses of these complementary homeostatic functions. A broader role in the homeostatic regulation of energy metabolism, autonomic function, hormonal balance and the regulation of body fluids, is also suggested.</text>
</comment>
<comment type="function">
    <molecule>Orexin-A</molecule>
    <text evidence="1">Binds to orexin receptors HCRTR1/OX1R and HCRTR2/OX2R with a high affinity (By similarity). Stimulates food intake (By similarity). Modulates pituitary luteinizing hormone secretion in an ovarian steroid-dependent manner (By similarity).</text>
</comment>
<comment type="function">
    <molecule>Orexin-B</molecule>
    <text evidence="1">Binds to orexin receptor HCRTR2/OX2R only (By similarity). Stimulates food intake (By similarity). Modulates pituitary luteinizing hormone secretion in an ovarian steroid-dependent manner (By similarity).</text>
</comment>
<comment type="subcellular location">
    <subcellularLocation>
        <location evidence="1">Rough endoplasmic reticulum</location>
    </subcellularLocation>
    <subcellularLocation>
        <location evidence="1">Cytoplasmic vesicle</location>
    </subcellularLocation>
    <subcellularLocation>
        <location evidence="1">Synapse</location>
    </subcellularLocation>
    <text evidence="1">Associated with perikaryal rough endoplasmic reticulum as well as cytoplasmic large granular vesicles at synapses.</text>
</comment>
<comment type="similarity">
    <text evidence="3">Belongs to the orexin family.</text>
</comment>
<comment type="online information" name="Protein Spotlight">
    <link uri="https://www.proteinspotlight.org/back_issues/015"/>
    <text>Qui dort dine - Issue 15 of October 2001</text>
</comment>
<accession>P56717</accession>
<accession>F1MRP1</accession>
<dbReference type="RefSeq" id="NP_001159992.1">
    <property type="nucleotide sequence ID" value="NM_001166520.1"/>
</dbReference>
<dbReference type="STRING" id="9913.ENSBTAP00000000875"/>
<dbReference type="PaxDb" id="9913-ENSBTAP00000000875"/>
<dbReference type="Ensembl" id="ENSBTAT00000000875.6">
    <property type="protein sequence ID" value="ENSBTAP00000000875.4"/>
    <property type="gene ID" value="ENSBTAG00000000665.6"/>
</dbReference>
<dbReference type="GeneID" id="281222"/>
<dbReference type="KEGG" id="bta:281222"/>
<dbReference type="CTD" id="3060"/>
<dbReference type="VEuPathDB" id="HostDB:ENSBTAG00000000665"/>
<dbReference type="VGNC" id="VGNC:29780">
    <property type="gene designation" value="HCRT"/>
</dbReference>
<dbReference type="eggNOG" id="ENOG502S83I">
    <property type="taxonomic scope" value="Eukaryota"/>
</dbReference>
<dbReference type="GeneTree" id="ENSGT00390000014272"/>
<dbReference type="HOGENOM" id="CLU_149027_1_0_1"/>
<dbReference type="InParanoid" id="P56717"/>
<dbReference type="OMA" id="HPCPGRR"/>
<dbReference type="OrthoDB" id="9379045at2759"/>
<dbReference type="TreeFam" id="TF330756"/>
<dbReference type="Reactome" id="R-BTA-389397">
    <property type="pathway name" value="Orexin and neuropeptides FF and QRFP bind to their respective receptors"/>
</dbReference>
<dbReference type="Reactome" id="R-BTA-416476">
    <property type="pathway name" value="G alpha (q) signalling events"/>
</dbReference>
<dbReference type="Proteomes" id="UP000009136">
    <property type="component" value="Chromosome 19"/>
</dbReference>
<dbReference type="Bgee" id="ENSBTAG00000000665">
    <property type="expression patterns" value="Expressed in hypothalamus and 30 other cell types or tissues"/>
</dbReference>
<dbReference type="GO" id="GO:0031410">
    <property type="term" value="C:cytoplasmic vesicle"/>
    <property type="evidence" value="ECO:0007669"/>
    <property type="project" value="UniProtKB-KW"/>
</dbReference>
<dbReference type="GO" id="GO:0048471">
    <property type="term" value="C:perinuclear region of cytoplasm"/>
    <property type="evidence" value="ECO:0000318"/>
    <property type="project" value="GO_Central"/>
</dbReference>
<dbReference type="GO" id="GO:0005791">
    <property type="term" value="C:rough endoplasmic reticulum"/>
    <property type="evidence" value="ECO:0007669"/>
    <property type="project" value="UniProtKB-SubCell"/>
</dbReference>
<dbReference type="GO" id="GO:0045202">
    <property type="term" value="C:synapse"/>
    <property type="evidence" value="ECO:0007669"/>
    <property type="project" value="UniProtKB-SubCell"/>
</dbReference>
<dbReference type="GO" id="GO:0005184">
    <property type="term" value="F:neuropeptide hormone activity"/>
    <property type="evidence" value="ECO:0000318"/>
    <property type="project" value="GO_Central"/>
</dbReference>
<dbReference type="GO" id="GO:0031771">
    <property type="term" value="F:type 1 orexin receptor binding"/>
    <property type="evidence" value="ECO:0000318"/>
    <property type="project" value="GO_Central"/>
</dbReference>
<dbReference type="GO" id="GO:0031772">
    <property type="term" value="F:type 2 orexin receptor binding"/>
    <property type="evidence" value="ECO:0000318"/>
    <property type="project" value="GO_Central"/>
</dbReference>
<dbReference type="GO" id="GO:0042755">
    <property type="term" value="P:eating behavior"/>
    <property type="evidence" value="ECO:0000318"/>
    <property type="project" value="GO_Central"/>
</dbReference>
<dbReference type="GO" id="GO:0007218">
    <property type="term" value="P:neuropeptide signaling pathway"/>
    <property type="evidence" value="ECO:0007669"/>
    <property type="project" value="UniProtKB-KW"/>
</dbReference>
<dbReference type="GO" id="GO:0120162">
    <property type="term" value="P:positive regulation of cold-induced thermogenesis"/>
    <property type="evidence" value="ECO:0007669"/>
    <property type="project" value="Ensembl"/>
</dbReference>
<dbReference type="GO" id="GO:0051971">
    <property type="term" value="P:positive regulation of transmission of nerve impulse"/>
    <property type="evidence" value="ECO:0000318"/>
    <property type="project" value="GO_Central"/>
</dbReference>
<dbReference type="GO" id="GO:0046928">
    <property type="term" value="P:regulation of neurotransmitter secretion"/>
    <property type="evidence" value="ECO:0000318"/>
    <property type="project" value="GO_Central"/>
</dbReference>
<dbReference type="GO" id="GO:0042594">
    <property type="term" value="P:response to starvation"/>
    <property type="evidence" value="ECO:0000318"/>
    <property type="project" value="GO_Central"/>
</dbReference>
<dbReference type="GO" id="GO:0030431">
    <property type="term" value="P:sleep"/>
    <property type="evidence" value="ECO:0000318"/>
    <property type="project" value="GO_Central"/>
</dbReference>
<dbReference type="GO" id="GO:0001659">
    <property type="term" value="P:temperature homeostasis"/>
    <property type="evidence" value="ECO:0000318"/>
    <property type="project" value="GO_Central"/>
</dbReference>
<dbReference type="InterPro" id="IPR001704">
    <property type="entry name" value="Orexin"/>
</dbReference>
<dbReference type="PANTHER" id="PTHR15173:SF2">
    <property type="entry name" value="HYPOCRETIN NEUROPEPTIDE PRECURSOR"/>
    <property type="match status" value="1"/>
</dbReference>
<dbReference type="PANTHER" id="PTHR15173">
    <property type="entry name" value="OREXIN"/>
    <property type="match status" value="1"/>
</dbReference>
<dbReference type="Pfam" id="PF02072">
    <property type="entry name" value="Orexin"/>
    <property type="match status" value="1"/>
</dbReference>
<dbReference type="PIRSF" id="PIRSF037824">
    <property type="entry name" value="Orexin"/>
    <property type="match status" value="1"/>
</dbReference>
<dbReference type="PRINTS" id="PR01091">
    <property type="entry name" value="OREXINPP"/>
</dbReference>
<proteinExistence type="evidence at protein level"/>
<protein>
    <recommendedName>
        <fullName evidence="1">Hypocretin neuropeptide precursor</fullName>
    </recommendedName>
    <alternativeName>
        <fullName evidence="1">Hypocretin</fullName>
        <shortName evidence="1">Hcrt</shortName>
    </alternativeName>
    <alternativeName>
        <fullName evidence="1">Orexin precursor</fullName>
    </alternativeName>
    <alternativeName>
        <fullName evidence="1">Prepro-orexin</fullName>
    </alternativeName>
    <alternativeName>
        <fullName evidence="1">Preprohypocretin</fullName>
    </alternativeName>
    <component>
        <recommendedName>
            <fullName evidence="1">Orexin-A</fullName>
        </recommendedName>
        <alternativeName>
            <fullName evidence="1">Hypocretin-1</fullName>
            <shortName evidence="3">Hcrt1</shortName>
        </alternativeName>
    </component>
    <component>
        <recommendedName>
            <fullName evidence="1">Orexin-B</fullName>
        </recommendedName>
        <alternativeName>
            <fullName evidence="1">Hypocretin-2</fullName>
            <shortName evidence="3">Hcrt2</shortName>
        </alternativeName>
    </component>
</protein>
<gene>
    <name type="primary">HCRT</name>
    <name type="synonym">OX</name>
    <name type="synonym">PPOX</name>
</gene>
<name>OREX_BOVIN</name>